<keyword id="KW-0067">ATP-binding</keyword>
<keyword id="KW-0997">Cell inner membrane</keyword>
<keyword id="KW-1003">Cell membrane</keyword>
<keyword id="KW-0472">Membrane</keyword>
<keyword id="KW-0547">Nucleotide-binding</keyword>
<keyword id="KW-0918">Phosphonate transport</keyword>
<keyword id="KW-1278">Translocase</keyword>
<keyword id="KW-0813">Transport</keyword>
<organism>
    <name type="scientific">Escherichia coli O6:K15:H31 (strain 536 / UPEC)</name>
    <dbReference type="NCBI Taxonomy" id="362663"/>
    <lineage>
        <taxon>Bacteria</taxon>
        <taxon>Pseudomonadati</taxon>
        <taxon>Pseudomonadota</taxon>
        <taxon>Gammaproteobacteria</taxon>
        <taxon>Enterobacterales</taxon>
        <taxon>Enterobacteriaceae</taxon>
        <taxon>Escherichia</taxon>
    </lineage>
</organism>
<evidence type="ECO:0000255" key="1">
    <source>
        <dbReference type="HAMAP-Rule" id="MF_01713"/>
    </source>
</evidence>
<feature type="chain" id="PRO_0000274712" description="Phosphonates import ATP-binding protein PhnC">
    <location>
        <begin position="1"/>
        <end position="262"/>
    </location>
</feature>
<feature type="domain" description="ABC transporter" evidence="1">
    <location>
        <begin position="5"/>
        <end position="253"/>
    </location>
</feature>
<feature type="binding site" evidence="1">
    <location>
        <begin position="37"/>
        <end position="44"/>
    </location>
    <ligand>
        <name>ATP</name>
        <dbReference type="ChEBI" id="CHEBI:30616"/>
    </ligand>
</feature>
<name>PHNC_ECOL5</name>
<comment type="function">
    <text evidence="1">Part of the ABC transporter complex PhnCDE involved in phosphonates import. Responsible for energy coupling to the transport system.</text>
</comment>
<comment type="catalytic activity">
    <reaction evidence="1">
        <text>phosphonate(out) + ATP + H2O = phosphonate(in) + ADP + phosphate + H(+)</text>
        <dbReference type="Rhea" id="RHEA:18065"/>
        <dbReference type="ChEBI" id="CHEBI:15377"/>
        <dbReference type="ChEBI" id="CHEBI:15378"/>
        <dbReference type="ChEBI" id="CHEBI:16215"/>
        <dbReference type="ChEBI" id="CHEBI:30616"/>
        <dbReference type="ChEBI" id="CHEBI:43474"/>
        <dbReference type="ChEBI" id="CHEBI:456216"/>
        <dbReference type="EC" id="7.3.2.2"/>
    </reaction>
</comment>
<comment type="subunit">
    <text evidence="1">The complex is composed of two ATP-binding proteins (PhnC), two transmembrane proteins (PhnE) and a solute-binding protein (PhnD).</text>
</comment>
<comment type="subcellular location">
    <subcellularLocation>
        <location evidence="1">Cell inner membrane</location>
        <topology evidence="1">Peripheral membrane protein</topology>
    </subcellularLocation>
</comment>
<comment type="similarity">
    <text evidence="1">Belongs to the ABC transporter superfamily. Phosphonates importer (TC 3.A.1.9.1) family.</text>
</comment>
<reference key="1">
    <citation type="journal article" date="2006" name="Mol. Microbiol.">
        <title>Role of pathogenicity island-associated integrases in the genome plasticity of uropathogenic Escherichia coli strain 536.</title>
        <authorList>
            <person name="Hochhut B."/>
            <person name="Wilde C."/>
            <person name="Balling G."/>
            <person name="Middendorf B."/>
            <person name="Dobrindt U."/>
            <person name="Brzuszkiewicz E."/>
            <person name="Gottschalk G."/>
            <person name="Carniel E."/>
            <person name="Hacker J."/>
        </authorList>
    </citation>
    <scope>NUCLEOTIDE SEQUENCE [LARGE SCALE GENOMIC DNA]</scope>
    <source>
        <strain>536 / UPEC</strain>
    </source>
</reference>
<protein>
    <recommendedName>
        <fullName evidence="1">Phosphonates import ATP-binding protein PhnC</fullName>
        <ecNumber evidence="1">7.3.2.2</ecNumber>
    </recommendedName>
</protein>
<sequence>MQTIIRVEKLAKTFNQHQALHAVDLNIHHGEMVALLGPSGSGKSTLLRHLSGLITGDKSAGSHIELLGRTVQREGRLARDIRKSRANTGYIFQQFNLVNRLSVLENVLIGALGSTPFWRTCFSWFTREQKQRALQALTRVGMVHFAHQRVSTLSGGQQQRVAIARALMQQAKVILADEPIASLDPESARIVMDTLRDINQNDGITVVVTLHQVDYALRYCERIVALRQGHVFYDGSSQQFDNERFDHLYRSINRVEENAKAA</sequence>
<gene>
    <name evidence="1" type="primary">phnC</name>
    <name type="ordered locus">ECP_4348</name>
</gene>
<accession>Q0T9T7</accession>
<proteinExistence type="inferred from homology"/>
<dbReference type="EC" id="7.3.2.2" evidence="1"/>
<dbReference type="EMBL" id="CP000247">
    <property type="protein sequence ID" value="ABG72292.1"/>
    <property type="molecule type" value="Genomic_DNA"/>
</dbReference>
<dbReference type="RefSeq" id="WP_001193398.1">
    <property type="nucleotide sequence ID" value="NC_008253.1"/>
</dbReference>
<dbReference type="SMR" id="Q0T9T7"/>
<dbReference type="KEGG" id="ecp:ECP_4348"/>
<dbReference type="HOGENOM" id="CLU_000604_1_22_6"/>
<dbReference type="Proteomes" id="UP000009182">
    <property type="component" value="Chromosome"/>
</dbReference>
<dbReference type="GO" id="GO:0005886">
    <property type="term" value="C:plasma membrane"/>
    <property type="evidence" value="ECO:0007669"/>
    <property type="project" value="UniProtKB-SubCell"/>
</dbReference>
<dbReference type="GO" id="GO:0015416">
    <property type="term" value="F:ABC-type phosphonate transporter activity"/>
    <property type="evidence" value="ECO:0007669"/>
    <property type="project" value="UniProtKB-EC"/>
</dbReference>
<dbReference type="GO" id="GO:0005524">
    <property type="term" value="F:ATP binding"/>
    <property type="evidence" value="ECO:0007669"/>
    <property type="project" value="UniProtKB-KW"/>
</dbReference>
<dbReference type="GO" id="GO:0016887">
    <property type="term" value="F:ATP hydrolysis activity"/>
    <property type="evidence" value="ECO:0007669"/>
    <property type="project" value="InterPro"/>
</dbReference>
<dbReference type="CDD" id="cd03256">
    <property type="entry name" value="ABC_PhnC_transporter"/>
    <property type="match status" value="1"/>
</dbReference>
<dbReference type="Gene3D" id="3.40.50.300">
    <property type="entry name" value="P-loop containing nucleotide triphosphate hydrolases"/>
    <property type="match status" value="1"/>
</dbReference>
<dbReference type="InterPro" id="IPR003593">
    <property type="entry name" value="AAA+_ATPase"/>
</dbReference>
<dbReference type="InterPro" id="IPR003439">
    <property type="entry name" value="ABC_transporter-like_ATP-bd"/>
</dbReference>
<dbReference type="InterPro" id="IPR017871">
    <property type="entry name" value="ABC_transporter-like_CS"/>
</dbReference>
<dbReference type="InterPro" id="IPR012693">
    <property type="entry name" value="ABC_transpr_PhnC"/>
</dbReference>
<dbReference type="InterPro" id="IPR050086">
    <property type="entry name" value="MetN_ABC_transporter-like"/>
</dbReference>
<dbReference type="InterPro" id="IPR027417">
    <property type="entry name" value="P-loop_NTPase"/>
</dbReference>
<dbReference type="NCBIfam" id="TIGR02315">
    <property type="entry name" value="ABC_phnC"/>
    <property type="match status" value="1"/>
</dbReference>
<dbReference type="NCBIfam" id="NF007438">
    <property type="entry name" value="PRK09984.1"/>
    <property type="match status" value="1"/>
</dbReference>
<dbReference type="PANTHER" id="PTHR43166">
    <property type="entry name" value="AMINO ACID IMPORT ATP-BINDING PROTEIN"/>
    <property type="match status" value="1"/>
</dbReference>
<dbReference type="PANTHER" id="PTHR43166:SF6">
    <property type="entry name" value="PHOSPHONATES IMPORT ATP-BINDING PROTEIN PHNC"/>
    <property type="match status" value="1"/>
</dbReference>
<dbReference type="Pfam" id="PF00005">
    <property type="entry name" value="ABC_tran"/>
    <property type="match status" value="1"/>
</dbReference>
<dbReference type="SMART" id="SM00382">
    <property type="entry name" value="AAA"/>
    <property type="match status" value="1"/>
</dbReference>
<dbReference type="SUPFAM" id="SSF52540">
    <property type="entry name" value="P-loop containing nucleoside triphosphate hydrolases"/>
    <property type="match status" value="1"/>
</dbReference>
<dbReference type="PROSITE" id="PS00211">
    <property type="entry name" value="ABC_TRANSPORTER_1"/>
    <property type="match status" value="1"/>
</dbReference>
<dbReference type="PROSITE" id="PS50893">
    <property type="entry name" value="ABC_TRANSPORTER_2"/>
    <property type="match status" value="1"/>
</dbReference>
<dbReference type="PROSITE" id="PS51249">
    <property type="entry name" value="PHNC"/>
    <property type="match status" value="1"/>
</dbReference>